<organism>
    <name type="scientific">Xenopus tropicalis</name>
    <name type="common">Western clawed frog</name>
    <name type="synonym">Silurana tropicalis</name>
    <dbReference type="NCBI Taxonomy" id="8364"/>
    <lineage>
        <taxon>Eukaryota</taxon>
        <taxon>Metazoa</taxon>
        <taxon>Chordata</taxon>
        <taxon>Craniata</taxon>
        <taxon>Vertebrata</taxon>
        <taxon>Euteleostomi</taxon>
        <taxon>Amphibia</taxon>
        <taxon>Batrachia</taxon>
        <taxon>Anura</taxon>
        <taxon>Pipoidea</taxon>
        <taxon>Pipidae</taxon>
        <taxon>Xenopodinae</taxon>
        <taxon>Xenopus</taxon>
        <taxon>Silurana</taxon>
    </lineage>
</organism>
<name>CBLB_XENTR</name>
<proteinExistence type="evidence at transcript level"/>
<gene>
    <name type="primary">cblb</name>
</gene>
<keyword id="KW-0106">Calcium</keyword>
<keyword id="KW-0963">Cytoplasm</keyword>
<keyword id="KW-0479">Metal-binding</keyword>
<keyword id="KW-1185">Reference proteome</keyword>
<keyword id="KW-0677">Repeat</keyword>
<keyword id="KW-0808">Transferase</keyword>
<keyword id="KW-0833">Ubl conjugation pathway</keyword>
<keyword id="KW-0862">Zinc</keyword>
<keyword id="KW-0863">Zinc-finger</keyword>
<comment type="function">
    <text evidence="3">E3 ubiquitin-protein ligase which accepts ubiquitin from specific E2 ubiquitin-conjugating enzymes, and transfers it to substrates, generally promoting their degradation by the proteasome.</text>
</comment>
<comment type="catalytic activity">
    <reaction evidence="3">
        <text>S-ubiquitinyl-[E2 ubiquitin-conjugating enzyme]-L-cysteine + [acceptor protein]-L-lysine = [E2 ubiquitin-conjugating enzyme]-L-cysteine + N(6)-ubiquitinyl-[acceptor protein]-L-lysine.</text>
        <dbReference type="EC" id="2.3.2.27"/>
    </reaction>
</comment>
<comment type="pathway">
    <text>Protein modification; protein ubiquitination.</text>
</comment>
<comment type="subunit">
    <text evidence="3">Interacts with several SH3 domain-containing proteins and with poly-ubiquitinated proteins.</text>
</comment>
<comment type="subcellular location">
    <subcellularLocation>
        <location evidence="3">Cytoplasm</location>
    </subcellularLocation>
</comment>
<comment type="domain">
    <text>The N-terminus is composed of the phosphotyrosine binding (PTB) domain, a short linker region and the RING-type zinc finger. The PTB domain, which is also called TKB (tyrosine kinase binding) domain, is composed of three different subdomains: a four-helix bundle (4H), a calcium-binding EF hand and a divergent SH2 domain.</text>
</comment>
<comment type="domain">
    <text evidence="3">The RING-type zinc finger domain mediates binding to an E2 ubiquitin-conjugating enzyme.</text>
</comment>
<comment type="domain">
    <text evidence="3">The UBA domain interacts with poly-ubiquitinated proteins.</text>
</comment>
<comment type="miscellaneous">
    <text evidence="1">This protein has one functional calcium-binding site.</text>
</comment>
<evidence type="ECO:0000250" key="1"/>
<evidence type="ECO:0000250" key="2">
    <source>
        <dbReference type="UniProtKB" id="P22681"/>
    </source>
</evidence>
<evidence type="ECO:0000250" key="3">
    <source>
        <dbReference type="UniProtKB" id="Q13191"/>
    </source>
</evidence>
<evidence type="ECO:0000255" key="4">
    <source>
        <dbReference type="PROSITE-ProRule" id="PRU00175"/>
    </source>
</evidence>
<evidence type="ECO:0000255" key="5">
    <source>
        <dbReference type="PROSITE-ProRule" id="PRU00212"/>
    </source>
</evidence>
<evidence type="ECO:0000255" key="6">
    <source>
        <dbReference type="PROSITE-ProRule" id="PRU00839"/>
    </source>
</evidence>
<evidence type="ECO:0000256" key="7">
    <source>
        <dbReference type="SAM" id="MobiDB-lite"/>
    </source>
</evidence>
<evidence type="ECO:0000305" key="8"/>
<sequence>MASSSSSSSSTNSSAVTGRLPGARSANPRKARILGLFDAIQDAVGPPKQAAADRRTVEKTWKLMDKVVRLCQNPKLQLKNSPPYILDILPDTYQHLRLILSKYDDNQKLAQLSENEYFKIYIDSLMKKSKRAIRLFKEGKERMYEEQSQERRNLTKLSLIFSHMLAEIKAIFPSGQFQGDNFRITKADAAEFWRKFFGERTIVPWKIFRQCLHEVHQISSGLEAMALKSTIDLTCNDYISVFEFDIFTRLFQPWTSILRNWNFLAVTHPGYMAFLTYDEVKARLQKYSTKPGSYIFRLSCTRLGQWAIGYVTADGNILQTIPHNKPLFQALIDGSREGFYLYPDGRSYNPDLTDLCEPTPHDHIKVTQEQYELYCEMGSTFQLCKICAENDKDVKIEPCGHLMCTSCLTSWQESDGQGCPFCRCEIKGTEPIVVDPFDPRDENRCCSFNDSLCTPMLDFDDDDLREECLIMNRLASLRKMNERQNSPVTSPGSSPLSQRRKTPPDPLQIPHLNLPPVPPRLDLIQKGLARSPCASPTGSPKSSPCMVRKQDKPLPAPPPPLREPPPPPERPPPIPPDSRTCRHLHHTENVPCRDQSTQHDAWCTRDISGASQPSICRVAHDGSPKLGVPSSSVLNGRHSRMSTEAGFIRHKHHKRRESPLETIRVYNGLSGNEEYDVPPRLSPPPPPPTITIHPAIKCPLLVNSVSDKVRNSAEEDDSEYKIPSSHPVSSRLPLHCHSIKHFPRLCENGQCLSNGTHNGISEIKKLKQPDQGDVIATSTVPVPLPSARTSARENHPHGSSLTRTPSDYDLLVPHPGEESFDSSPPSQPPPPPPARTCVPEHAMPTASGCRPNSDVDLFLPHSDPCPEAPLPPARRGPGEAKSNRLSQEYDQLPSCPDCPQAPARPPKPVPRRTAPEIHHRRHYNCDSLAENVDAKIAKLMGEGFPFEEVKRALEIAQNNVDVARSILREFAFPPPVCPRLHL</sequence>
<feature type="chain" id="PRO_0000055865" description="E3 ubiquitin-protein ligase CBL-B">
    <location>
        <begin position="1"/>
        <end position="982"/>
    </location>
</feature>
<feature type="domain" description="Cbl-PTB" evidence="6">
    <location>
        <begin position="46"/>
        <end position="354"/>
    </location>
</feature>
<feature type="domain" description="UBA" evidence="5">
    <location>
        <begin position="927"/>
        <end position="970"/>
    </location>
</feature>
<feature type="zinc finger region" description="RING-type" evidence="4">
    <location>
        <begin position="384"/>
        <end position="423"/>
    </location>
</feature>
<feature type="region of interest" description="Disordered" evidence="7">
    <location>
        <begin position="1"/>
        <end position="25"/>
    </location>
</feature>
<feature type="region of interest" description="4H">
    <location>
        <begin position="46"/>
        <end position="178"/>
    </location>
</feature>
<feature type="region of interest" description="EF-hand-like">
    <location>
        <begin position="179"/>
        <end position="251"/>
    </location>
</feature>
<feature type="region of interest" description="SH2-like">
    <location>
        <begin position="252"/>
        <end position="354"/>
    </location>
</feature>
<feature type="region of interest" description="Linker">
    <location>
        <begin position="355"/>
        <end position="383"/>
    </location>
</feature>
<feature type="region of interest" description="Disordered" evidence="7">
    <location>
        <begin position="480"/>
        <end position="582"/>
    </location>
</feature>
<feature type="region of interest" description="Disordered" evidence="7">
    <location>
        <begin position="709"/>
        <end position="728"/>
    </location>
</feature>
<feature type="region of interest" description="Disordered" evidence="7">
    <location>
        <begin position="766"/>
        <end position="911"/>
    </location>
</feature>
<feature type="compositionally biased region" description="Low complexity" evidence="7">
    <location>
        <begin position="1"/>
        <end position="14"/>
    </location>
</feature>
<feature type="compositionally biased region" description="Polar residues" evidence="7">
    <location>
        <begin position="483"/>
        <end position="497"/>
    </location>
</feature>
<feature type="compositionally biased region" description="Pro residues" evidence="7">
    <location>
        <begin position="554"/>
        <end position="576"/>
    </location>
</feature>
<feature type="compositionally biased region" description="Pro residues" evidence="7">
    <location>
        <begin position="825"/>
        <end position="834"/>
    </location>
</feature>
<feature type="binding site" evidence="2">
    <location>
        <position position="232"/>
    </location>
    <ligand>
        <name>Ca(2+)</name>
        <dbReference type="ChEBI" id="CHEBI:29108"/>
    </ligand>
</feature>
<feature type="binding site" evidence="2">
    <location>
        <position position="234"/>
    </location>
    <ligand>
        <name>Ca(2+)</name>
        <dbReference type="ChEBI" id="CHEBI:29108"/>
    </ligand>
</feature>
<feature type="binding site" evidence="2">
    <location>
        <position position="236"/>
    </location>
    <ligand>
        <name>Ca(2+)</name>
        <dbReference type="ChEBI" id="CHEBI:29108"/>
    </ligand>
</feature>
<feature type="binding site" evidence="2">
    <location>
        <position position="238"/>
    </location>
    <ligand>
        <name>Ca(2+)</name>
        <dbReference type="ChEBI" id="CHEBI:29108"/>
    </ligand>
</feature>
<feature type="binding site" evidence="2">
    <location>
        <position position="243"/>
    </location>
    <ligand>
        <name>Ca(2+)</name>
        <dbReference type="ChEBI" id="CHEBI:29108"/>
    </ligand>
</feature>
<feature type="binding site" evidence="1">
    <location>
        <position position="297"/>
    </location>
    <ligand>
        <name>4-O-phospho-L-tyrosine</name>
        <dbReference type="ChEBI" id="CHEBI:62338"/>
    </ligand>
</feature>
<reference key="1">
    <citation type="submission" date="2004-07" db="EMBL/GenBank/DDBJ databases">
        <authorList>
            <consortium name="NIH - Xenopus Gene Collection (XGC) project"/>
        </authorList>
    </citation>
    <scope>NUCLEOTIDE SEQUENCE [LARGE SCALE MRNA]</scope>
    <source>
        <tissue>Embryo</tissue>
    </source>
</reference>
<accession>Q6DFR2</accession>
<protein>
    <recommendedName>
        <fullName>E3 ubiquitin-protein ligase CBL-B</fullName>
        <ecNumber evidence="3">2.3.2.27</ecNumber>
    </recommendedName>
    <alternativeName>
        <fullName evidence="8">RING-type E3 ubiquitin transferase CBL-B</fullName>
    </alternativeName>
    <alternativeName>
        <fullName>SH3-binding protein CBL-B</fullName>
    </alternativeName>
    <alternativeName>
        <fullName>Signal transduction protein CBL-B</fullName>
    </alternativeName>
</protein>
<dbReference type="EC" id="2.3.2.27" evidence="3"/>
<dbReference type="EMBL" id="BC076671">
    <property type="protein sequence ID" value="AAH76671.1"/>
    <property type="molecule type" value="mRNA"/>
</dbReference>
<dbReference type="RefSeq" id="NP_001006802.1">
    <property type="nucleotide sequence ID" value="NM_001006801.1"/>
</dbReference>
<dbReference type="BMRB" id="Q6DFR2"/>
<dbReference type="SMR" id="Q6DFR2"/>
<dbReference type="FunCoup" id="Q6DFR2">
    <property type="interactions" value="2684"/>
</dbReference>
<dbReference type="STRING" id="8364.ENSXETP00000022441"/>
<dbReference type="DNASU" id="448509"/>
<dbReference type="GeneID" id="448509"/>
<dbReference type="KEGG" id="xtr:448509"/>
<dbReference type="AGR" id="Xenbase:XB-GENE-1018102"/>
<dbReference type="CTD" id="868"/>
<dbReference type="Xenbase" id="XB-GENE-1018102">
    <property type="gene designation" value="cblb"/>
</dbReference>
<dbReference type="InParanoid" id="Q6DFR2"/>
<dbReference type="OMA" id="FACFPPP"/>
<dbReference type="OrthoDB" id="7237699at2759"/>
<dbReference type="Reactome" id="R-XTR-983168">
    <property type="pathway name" value="Antigen processing: Ubiquitination &amp; Proteasome degradation"/>
</dbReference>
<dbReference type="UniPathway" id="UPA00143"/>
<dbReference type="Proteomes" id="UP000008143">
    <property type="component" value="Chromosome 2"/>
</dbReference>
<dbReference type="Bgee" id="ENSXETG00000016127">
    <property type="expression patterns" value="Expressed in ovary and 12 other cell types or tissues"/>
</dbReference>
<dbReference type="ExpressionAtlas" id="Q6DFR2">
    <property type="expression patterns" value="baseline"/>
</dbReference>
<dbReference type="GO" id="GO:0005737">
    <property type="term" value="C:cytoplasm"/>
    <property type="evidence" value="ECO:0007669"/>
    <property type="project" value="UniProtKB-SubCell"/>
</dbReference>
<dbReference type="GO" id="GO:0005509">
    <property type="term" value="F:calcium ion binding"/>
    <property type="evidence" value="ECO:0007669"/>
    <property type="project" value="InterPro"/>
</dbReference>
<dbReference type="GO" id="GO:0001784">
    <property type="term" value="F:phosphotyrosine residue binding"/>
    <property type="evidence" value="ECO:0007669"/>
    <property type="project" value="InterPro"/>
</dbReference>
<dbReference type="GO" id="GO:0004842">
    <property type="term" value="F:ubiquitin-protein transferase activity"/>
    <property type="evidence" value="ECO:0007669"/>
    <property type="project" value="InterPro"/>
</dbReference>
<dbReference type="GO" id="GO:0008270">
    <property type="term" value="F:zinc ion binding"/>
    <property type="evidence" value="ECO:0007669"/>
    <property type="project" value="UniProtKB-KW"/>
</dbReference>
<dbReference type="GO" id="GO:0007166">
    <property type="term" value="P:cell surface receptor signaling pathway"/>
    <property type="evidence" value="ECO:0007669"/>
    <property type="project" value="InterPro"/>
</dbReference>
<dbReference type="GO" id="GO:0016567">
    <property type="term" value="P:protein ubiquitination"/>
    <property type="evidence" value="ECO:0007669"/>
    <property type="project" value="UniProtKB-UniPathway"/>
</dbReference>
<dbReference type="GO" id="GO:2000583">
    <property type="term" value="P:regulation of platelet-derived growth factor receptor-alpha signaling pathway"/>
    <property type="evidence" value="ECO:0000250"/>
    <property type="project" value="UniProtKB"/>
</dbReference>
<dbReference type="CDD" id="cd16708">
    <property type="entry name" value="RING-HC_Cbl"/>
    <property type="match status" value="1"/>
</dbReference>
<dbReference type="CDD" id="cd09920">
    <property type="entry name" value="SH2_Cbl-b_TKB"/>
    <property type="match status" value="1"/>
</dbReference>
<dbReference type="CDD" id="cd14392">
    <property type="entry name" value="UBA_Cbl-b"/>
    <property type="match status" value="1"/>
</dbReference>
<dbReference type="FunFam" id="1.10.238.10:FF:000022">
    <property type="entry name" value="E3 ubiquitin-protein ligase CBL"/>
    <property type="match status" value="1"/>
</dbReference>
<dbReference type="FunFam" id="1.20.930.20:FF:000001">
    <property type="entry name" value="E3 ubiquitin-protein ligase CBL"/>
    <property type="match status" value="1"/>
</dbReference>
<dbReference type="FunFam" id="3.30.40.10:FF:000015">
    <property type="entry name" value="E3 ubiquitin-protein ligase CBL"/>
    <property type="match status" value="1"/>
</dbReference>
<dbReference type="FunFam" id="3.30.505.10:FF:000154">
    <property type="entry name" value="E3 ubiquitin-protein ligase CBL"/>
    <property type="match status" value="1"/>
</dbReference>
<dbReference type="FunFam" id="1.10.8.10:FF:000037">
    <property type="entry name" value="E3 ubiquitin-protein ligase CBL-B isoform B"/>
    <property type="match status" value="1"/>
</dbReference>
<dbReference type="Gene3D" id="1.20.930.20">
    <property type="entry name" value="Adaptor protein Cbl, N-terminal domain"/>
    <property type="match status" value="1"/>
</dbReference>
<dbReference type="Gene3D" id="1.10.8.10">
    <property type="entry name" value="DNA helicase RuvA subunit, C-terminal domain"/>
    <property type="match status" value="1"/>
</dbReference>
<dbReference type="Gene3D" id="1.10.238.10">
    <property type="entry name" value="EF-hand"/>
    <property type="match status" value="1"/>
</dbReference>
<dbReference type="Gene3D" id="3.30.505.10">
    <property type="entry name" value="SH2 domain"/>
    <property type="match status" value="1"/>
</dbReference>
<dbReference type="Gene3D" id="3.30.40.10">
    <property type="entry name" value="Zinc/RING finger domain, C3HC4 (zinc finger)"/>
    <property type="match status" value="1"/>
</dbReference>
<dbReference type="InterPro" id="IPR024162">
    <property type="entry name" value="Adaptor_Cbl"/>
</dbReference>
<dbReference type="InterPro" id="IPR014741">
    <property type="entry name" value="Adaptor_Cbl_EF_hand-like"/>
</dbReference>
<dbReference type="InterPro" id="IPR036537">
    <property type="entry name" value="Adaptor_Cbl_N_dom_sf"/>
</dbReference>
<dbReference type="InterPro" id="IPR003153">
    <property type="entry name" value="Adaptor_Cbl_N_hlx"/>
</dbReference>
<dbReference type="InterPro" id="IPR014742">
    <property type="entry name" value="Adaptor_Cbl_SH2-like"/>
</dbReference>
<dbReference type="InterPro" id="IPR024159">
    <property type="entry name" value="Cbl_PTB"/>
</dbReference>
<dbReference type="InterPro" id="IPR011992">
    <property type="entry name" value="EF-hand-dom_pair"/>
</dbReference>
<dbReference type="InterPro" id="IPR036860">
    <property type="entry name" value="SH2_dom_sf"/>
</dbReference>
<dbReference type="InterPro" id="IPR015940">
    <property type="entry name" value="UBA"/>
</dbReference>
<dbReference type="InterPro" id="IPR009060">
    <property type="entry name" value="UBA-like_sf"/>
</dbReference>
<dbReference type="InterPro" id="IPR018957">
    <property type="entry name" value="Znf_C3HC4_RING-type"/>
</dbReference>
<dbReference type="InterPro" id="IPR001841">
    <property type="entry name" value="Znf_RING"/>
</dbReference>
<dbReference type="InterPro" id="IPR013083">
    <property type="entry name" value="Znf_RING/FYVE/PHD"/>
</dbReference>
<dbReference type="InterPro" id="IPR017907">
    <property type="entry name" value="Znf_RING_CS"/>
</dbReference>
<dbReference type="PANTHER" id="PTHR23007">
    <property type="entry name" value="CBL"/>
    <property type="match status" value="1"/>
</dbReference>
<dbReference type="PANTHER" id="PTHR23007:SF3">
    <property type="entry name" value="E3 UBIQUITIN-PROTEIN LIGASE CBL-B"/>
    <property type="match status" value="1"/>
</dbReference>
<dbReference type="Pfam" id="PF02262">
    <property type="entry name" value="Cbl_N"/>
    <property type="match status" value="1"/>
</dbReference>
<dbReference type="Pfam" id="PF02761">
    <property type="entry name" value="Cbl_N2"/>
    <property type="match status" value="1"/>
</dbReference>
<dbReference type="Pfam" id="PF02762">
    <property type="entry name" value="Cbl_N3"/>
    <property type="match status" value="1"/>
</dbReference>
<dbReference type="Pfam" id="PF00097">
    <property type="entry name" value="zf-C3HC4"/>
    <property type="match status" value="1"/>
</dbReference>
<dbReference type="SMART" id="SM00184">
    <property type="entry name" value="RING"/>
    <property type="match status" value="1"/>
</dbReference>
<dbReference type="SMART" id="SM00165">
    <property type="entry name" value="UBA"/>
    <property type="match status" value="1"/>
</dbReference>
<dbReference type="SUPFAM" id="SSF47473">
    <property type="entry name" value="EF-hand"/>
    <property type="match status" value="1"/>
</dbReference>
<dbReference type="SUPFAM" id="SSF47668">
    <property type="entry name" value="N-terminal domain of cbl (N-cbl)"/>
    <property type="match status" value="1"/>
</dbReference>
<dbReference type="SUPFAM" id="SSF57850">
    <property type="entry name" value="RING/U-box"/>
    <property type="match status" value="1"/>
</dbReference>
<dbReference type="SUPFAM" id="SSF55550">
    <property type="entry name" value="SH2 domain"/>
    <property type="match status" value="1"/>
</dbReference>
<dbReference type="SUPFAM" id="SSF46934">
    <property type="entry name" value="UBA-like"/>
    <property type="match status" value="1"/>
</dbReference>
<dbReference type="PROSITE" id="PS51506">
    <property type="entry name" value="CBL_PTB"/>
    <property type="match status" value="1"/>
</dbReference>
<dbReference type="PROSITE" id="PS50030">
    <property type="entry name" value="UBA"/>
    <property type="match status" value="1"/>
</dbReference>
<dbReference type="PROSITE" id="PS00518">
    <property type="entry name" value="ZF_RING_1"/>
    <property type="match status" value="1"/>
</dbReference>
<dbReference type="PROSITE" id="PS50089">
    <property type="entry name" value="ZF_RING_2"/>
    <property type="match status" value="1"/>
</dbReference>